<sequence>MANPRVEELPDEEVKKTVVDDHDDDSSSDSDGEEETNLPAGSTAVIHSRNEKKARKAIEKLHLIRVDGITRVTLRRPKNILFVINNPEVYKSPNSGTYIVFGEAKIEDLNASAQAAAAQQLASSAGHDHDHAGHSHGEAKASEGDAKKEEEDDDEEVDADGIEDKDIELVMTQAGVSRTKAIKALKENDNDIVNSIMALSV</sequence>
<protein>
    <recommendedName>
        <fullName>Nascent polypeptide-associated complex subunit alpha</fullName>
        <shortName>NAC-alpha</shortName>
    </recommendedName>
    <alternativeName>
        <fullName>Alpha-NAC</fullName>
    </alternativeName>
</protein>
<organism>
    <name type="scientific">Pyricularia oryzae (strain 70-15 / ATCC MYA-4617 / FGSC 8958)</name>
    <name type="common">Rice blast fungus</name>
    <name type="synonym">Magnaporthe oryzae</name>
    <dbReference type="NCBI Taxonomy" id="242507"/>
    <lineage>
        <taxon>Eukaryota</taxon>
        <taxon>Fungi</taxon>
        <taxon>Dikarya</taxon>
        <taxon>Ascomycota</taxon>
        <taxon>Pezizomycotina</taxon>
        <taxon>Sordariomycetes</taxon>
        <taxon>Sordariomycetidae</taxon>
        <taxon>Magnaporthales</taxon>
        <taxon>Pyriculariaceae</taxon>
        <taxon>Pyricularia</taxon>
    </lineage>
</organism>
<reference key="1">
    <citation type="journal article" date="2005" name="Nature">
        <title>The genome sequence of the rice blast fungus Magnaporthe grisea.</title>
        <authorList>
            <person name="Dean R.A."/>
            <person name="Talbot N.J."/>
            <person name="Ebbole D.J."/>
            <person name="Farman M.L."/>
            <person name="Mitchell T.K."/>
            <person name="Orbach M.J."/>
            <person name="Thon M.R."/>
            <person name="Kulkarni R."/>
            <person name="Xu J.-R."/>
            <person name="Pan H."/>
            <person name="Read N.D."/>
            <person name="Lee Y.-H."/>
            <person name="Carbone I."/>
            <person name="Brown D."/>
            <person name="Oh Y.Y."/>
            <person name="Donofrio N."/>
            <person name="Jeong J.S."/>
            <person name="Soanes D.M."/>
            <person name="Djonovic S."/>
            <person name="Kolomiets E."/>
            <person name="Rehmeyer C."/>
            <person name="Li W."/>
            <person name="Harding M."/>
            <person name="Kim S."/>
            <person name="Lebrun M.-H."/>
            <person name="Bohnert H."/>
            <person name="Coughlan S."/>
            <person name="Butler J."/>
            <person name="Calvo S.E."/>
            <person name="Ma L.-J."/>
            <person name="Nicol R."/>
            <person name="Purcell S."/>
            <person name="Nusbaum C."/>
            <person name="Galagan J.E."/>
            <person name="Birren B.W."/>
        </authorList>
    </citation>
    <scope>NUCLEOTIDE SEQUENCE [LARGE SCALE GENOMIC DNA]</scope>
    <source>
        <strain>70-15 / ATCC MYA-4617 / FGSC 8958</strain>
    </source>
</reference>
<proteinExistence type="inferred from homology"/>
<keyword id="KW-0963">Cytoplasm</keyword>
<keyword id="KW-0539">Nucleus</keyword>
<keyword id="KW-0653">Protein transport</keyword>
<keyword id="KW-1185">Reference proteome</keyword>
<keyword id="KW-0813">Transport</keyword>
<dbReference type="EMBL" id="CM001237">
    <property type="protein sequence ID" value="EHA46375.1"/>
    <property type="molecule type" value="Genomic_DNA"/>
</dbReference>
<dbReference type="RefSeq" id="XP_003721118.1">
    <property type="nucleotide sequence ID" value="XM_003721070.1"/>
</dbReference>
<dbReference type="SMR" id="A4RC89"/>
<dbReference type="FunCoup" id="A4RC89">
    <property type="interactions" value="548"/>
</dbReference>
<dbReference type="STRING" id="242507.A4RC89"/>
<dbReference type="EnsemblFungi" id="MGG_02660T0">
    <property type="protein sequence ID" value="MGG_02660T0"/>
    <property type="gene ID" value="MGG_02660"/>
</dbReference>
<dbReference type="GeneID" id="2682791"/>
<dbReference type="KEGG" id="mgr:MGG_02660"/>
<dbReference type="VEuPathDB" id="FungiDB:MGG_02660"/>
<dbReference type="eggNOG" id="KOG2239">
    <property type="taxonomic scope" value="Eukaryota"/>
</dbReference>
<dbReference type="HOGENOM" id="CLU_057806_2_0_1"/>
<dbReference type="InParanoid" id="A4RC89"/>
<dbReference type="OMA" id="SQKMIFA"/>
<dbReference type="OrthoDB" id="3169036at2759"/>
<dbReference type="Proteomes" id="UP000009058">
    <property type="component" value="Chromosome 7"/>
</dbReference>
<dbReference type="GO" id="GO:0005854">
    <property type="term" value="C:nascent polypeptide-associated complex"/>
    <property type="evidence" value="ECO:0007669"/>
    <property type="project" value="InterPro"/>
</dbReference>
<dbReference type="GO" id="GO:0005634">
    <property type="term" value="C:nucleus"/>
    <property type="evidence" value="ECO:0007669"/>
    <property type="project" value="UniProtKB-SubCell"/>
</dbReference>
<dbReference type="GO" id="GO:0015031">
    <property type="term" value="P:protein transport"/>
    <property type="evidence" value="ECO:0007669"/>
    <property type="project" value="UniProtKB-KW"/>
</dbReference>
<dbReference type="CDD" id="cd22054">
    <property type="entry name" value="NAC_NACA"/>
    <property type="match status" value="1"/>
</dbReference>
<dbReference type="CDD" id="cd14358">
    <property type="entry name" value="UBA_NAC_euk"/>
    <property type="match status" value="1"/>
</dbReference>
<dbReference type="FunFam" id="2.20.70.30:FF:000002">
    <property type="entry name" value="Nascent polypeptide-associated complex (NAC), alpha subunit"/>
    <property type="match status" value="1"/>
</dbReference>
<dbReference type="FunFam" id="1.10.8.10:FF:000006">
    <property type="entry name" value="Putative nascent polypeptide-associated complex subunit alpha"/>
    <property type="match status" value="1"/>
</dbReference>
<dbReference type="Gene3D" id="1.10.8.10">
    <property type="entry name" value="DNA helicase RuvA subunit, C-terminal domain"/>
    <property type="match status" value="1"/>
</dbReference>
<dbReference type="Gene3D" id="2.20.70.30">
    <property type="entry name" value="Nascent polypeptide-associated complex domain"/>
    <property type="match status" value="1"/>
</dbReference>
<dbReference type="InterPro" id="IPR016641">
    <property type="entry name" value="EGD2/NACA0like"/>
</dbReference>
<dbReference type="InterPro" id="IPR044034">
    <property type="entry name" value="NAC-like_UBA"/>
</dbReference>
<dbReference type="InterPro" id="IPR038187">
    <property type="entry name" value="NAC_A/B_dom_sf"/>
</dbReference>
<dbReference type="InterPro" id="IPR002715">
    <property type="entry name" value="Nas_poly-pep-assoc_cplx_dom"/>
</dbReference>
<dbReference type="PANTHER" id="PTHR21713">
    <property type="entry name" value="NASCENT POLYPEPTIDE ASSOCIATED COMPLEX ALPHA SUBUNIT-RELATED"/>
    <property type="match status" value="1"/>
</dbReference>
<dbReference type="Pfam" id="PF01849">
    <property type="entry name" value="NAC"/>
    <property type="match status" value="1"/>
</dbReference>
<dbReference type="Pfam" id="PF19026">
    <property type="entry name" value="UBA_HYPK"/>
    <property type="match status" value="1"/>
</dbReference>
<dbReference type="PIRSF" id="PIRSF015901">
    <property type="entry name" value="NAC_alpha"/>
    <property type="match status" value="1"/>
</dbReference>
<dbReference type="SMART" id="SM01407">
    <property type="entry name" value="NAC"/>
    <property type="match status" value="1"/>
</dbReference>
<dbReference type="PROSITE" id="PS51151">
    <property type="entry name" value="NAC_AB"/>
    <property type="match status" value="1"/>
</dbReference>
<comment type="function">
    <text evidence="1">Component of the nascent polypeptide-associated complex (NAC), a dynamic component of the ribosomal exit tunnel, protecting the emerging polypeptides from interaction with other cytoplasmic proteins to ensure appropriate nascent protein targeting. The NAC complex also promotes mitochondrial protein import by enhancing productive ribosome interactions with the outer mitochondrial membrane and blocks the inappropriate interaction of ribosomes translating non-secretory nascent polypeptides with translocation sites in the membrane of the endoplasmic reticulum. EGD2 may also be involved in transcription regulation (By similarity).</text>
</comment>
<comment type="subunit">
    <text evidence="1">Part of the nascent polypeptide-associated complex (NAC), consisting of EGD2 and EGD1. NAC associates with ribosomes via EGD1 (By similarity).</text>
</comment>
<comment type="subcellular location">
    <subcellularLocation>
        <location evidence="1">Cytoplasm</location>
    </subcellularLocation>
    <subcellularLocation>
        <location evidence="1">Nucleus</location>
    </subcellularLocation>
    <text evidence="1">Predominantly cytoplasmic, may also transiently localize to the nucleus.</text>
</comment>
<comment type="similarity">
    <text evidence="4">Belongs to the NAC-alpha family.</text>
</comment>
<name>NACA_PYRO7</name>
<gene>
    <name type="primary">EGD2</name>
    <name type="ORF">MGG_02660</name>
</gene>
<evidence type="ECO:0000250" key="1"/>
<evidence type="ECO:0000255" key="2">
    <source>
        <dbReference type="PROSITE-ProRule" id="PRU00507"/>
    </source>
</evidence>
<evidence type="ECO:0000256" key="3">
    <source>
        <dbReference type="SAM" id="MobiDB-lite"/>
    </source>
</evidence>
<evidence type="ECO:0000305" key="4"/>
<feature type="chain" id="PRO_0000294527" description="Nascent polypeptide-associated complex subunit alpha">
    <location>
        <begin position="1"/>
        <end position="201"/>
    </location>
</feature>
<feature type="domain" description="NAC-A/B" evidence="2">
    <location>
        <begin position="48"/>
        <end position="113"/>
    </location>
</feature>
<feature type="domain" description="UBA">
    <location>
        <begin position="162"/>
        <end position="200"/>
    </location>
</feature>
<feature type="region of interest" description="Disordered" evidence="3">
    <location>
        <begin position="1"/>
        <end position="51"/>
    </location>
</feature>
<feature type="region of interest" description="Disordered" evidence="3">
    <location>
        <begin position="118"/>
        <end position="165"/>
    </location>
</feature>
<feature type="compositionally biased region" description="Basic and acidic residues" evidence="3">
    <location>
        <begin position="1"/>
        <end position="20"/>
    </location>
</feature>
<feature type="compositionally biased region" description="Acidic residues" evidence="3">
    <location>
        <begin position="21"/>
        <end position="36"/>
    </location>
</feature>
<feature type="compositionally biased region" description="Basic and acidic residues" evidence="3">
    <location>
        <begin position="126"/>
        <end position="149"/>
    </location>
</feature>
<feature type="compositionally biased region" description="Acidic residues" evidence="3">
    <location>
        <begin position="150"/>
        <end position="161"/>
    </location>
</feature>
<accession>A4RC89</accession>
<accession>G4NJF9</accession>